<dbReference type="EC" id="3.1.1.4"/>
<dbReference type="GO" id="GO:0005576">
    <property type="term" value="C:extracellular region"/>
    <property type="evidence" value="ECO:0007669"/>
    <property type="project" value="UniProtKB-SubCell"/>
</dbReference>
<dbReference type="GO" id="GO:0046872">
    <property type="term" value="F:metal ion binding"/>
    <property type="evidence" value="ECO:0007669"/>
    <property type="project" value="UniProtKB-KW"/>
</dbReference>
<dbReference type="GO" id="GO:0004623">
    <property type="term" value="F:phospholipase A2 activity"/>
    <property type="evidence" value="ECO:0007669"/>
    <property type="project" value="UniProtKB-EC"/>
</dbReference>
<dbReference type="GO" id="GO:0090729">
    <property type="term" value="F:toxin activity"/>
    <property type="evidence" value="ECO:0007669"/>
    <property type="project" value="UniProtKB-KW"/>
</dbReference>
<dbReference type="GO" id="GO:0016042">
    <property type="term" value="P:lipid catabolic process"/>
    <property type="evidence" value="ECO:0007669"/>
    <property type="project" value="UniProtKB-KW"/>
</dbReference>
<name>PA2B3_SISMB</name>
<evidence type="ECO:0000250" key="1"/>
<evidence type="ECO:0000269" key="2">
    <source>
    </source>
</evidence>
<evidence type="ECO:0000303" key="3">
    <source>
    </source>
</evidence>
<evidence type="ECO:0000305" key="4"/>
<evidence type="ECO:0000305" key="5">
    <source>
    </source>
</evidence>
<comment type="function">
    <text evidence="1">Snake venom phospholipase A2 (PLA2) that shows myotoxic activities. PLA2 catalyzes the calcium-dependent hydrolysis of the 2-acyl groups in 3-sn-phosphoglycerides (By similarity).</text>
</comment>
<comment type="catalytic activity">
    <reaction>
        <text>a 1,2-diacyl-sn-glycero-3-phosphocholine + H2O = a 1-acyl-sn-glycero-3-phosphocholine + a fatty acid + H(+)</text>
        <dbReference type="Rhea" id="RHEA:15801"/>
        <dbReference type="ChEBI" id="CHEBI:15377"/>
        <dbReference type="ChEBI" id="CHEBI:15378"/>
        <dbReference type="ChEBI" id="CHEBI:28868"/>
        <dbReference type="ChEBI" id="CHEBI:57643"/>
        <dbReference type="ChEBI" id="CHEBI:58168"/>
        <dbReference type="EC" id="3.1.1.4"/>
    </reaction>
</comment>
<comment type="cofactor">
    <cofactor evidence="1">
        <name>Ca(2+)</name>
        <dbReference type="ChEBI" id="CHEBI:29108"/>
    </cofactor>
    <text evidence="1">Binds 1 Ca(2+) ion.</text>
</comment>
<comment type="biophysicochemical properties">
    <kinetics>
        <Vmax evidence="2">324.0 umol/min/mg enzyme with DPPC + deoxycholate as substrate (at pH 7.4 and 37 degrees Celsius)</Vmax>
        <Vmax evidence="2">1.0 umol/min/mg enzyme with DPPC + Triton X-100 as substrate (at pH 7.4 and 37 degrees Celsius)</Vmax>
        <text>When tested as a monomer.</text>
    </kinetics>
</comment>
<comment type="subcellular location">
    <subcellularLocation>
        <location evidence="2">Secreted</location>
    </subcellularLocation>
</comment>
<comment type="tissue specificity">
    <text evidence="5">Expressed by the venom gland.</text>
</comment>
<comment type="PTM">
    <text evidence="1">Contains 7 disulfide bonds.</text>
</comment>
<comment type="mass spectrometry" mass="13948.0" method="Electrospray" evidence="2"/>
<comment type="miscellaneous">
    <text evidence="5">Negative results: does not show neurotoxic activities.</text>
</comment>
<comment type="similarity">
    <text evidence="4">Belongs to the phospholipase A2 family. Group II subfamily.</text>
</comment>
<organism>
    <name type="scientific">Sistrurus miliarius barbouri</name>
    <name type="common">Dusky pigmy rattlesnake</name>
    <name type="synonym">Sistrurus barbouri</name>
    <dbReference type="NCBI Taxonomy" id="8759"/>
    <lineage>
        <taxon>Eukaryota</taxon>
        <taxon>Metazoa</taxon>
        <taxon>Chordata</taxon>
        <taxon>Craniata</taxon>
        <taxon>Vertebrata</taxon>
        <taxon>Euteleostomi</taxon>
        <taxon>Lepidosauria</taxon>
        <taxon>Squamata</taxon>
        <taxon>Bifurcata</taxon>
        <taxon>Unidentata</taxon>
        <taxon>Episquamata</taxon>
        <taxon>Toxicofera</taxon>
        <taxon>Serpentes</taxon>
        <taxon>Colubroidea</taxon>
        <taxon>Viperidae</taxon>
        <taxon>Crotalinae</taxon>
        <taxon>Sistrurus</taxon>
    </lineage>
</organism>
<proteinExistence type="evidence at protein level"/>
<feature type="chain" id="PRO_0000418576" description="Basic phospholipase A2 Smb-N6">
    <location>
        <begin position="1"/>
        <end position="23" status="greater than"/>
    </location>
</feature>
<feature type="non-terminal residue">
    <location>
        <position position="23"/>
    </location>
</feature>
<reference key="1">
    <citation type="journal article" date="2004" name="Biochem. J.">
        <title>Molecular evolution and structure-function relationships of crotoxin-like and asparagine-6-containing phospholipases A2 in pit viper venoms.</title>
        <authorList>
            <person name="Chen Y.-H."/>
            <person name="Wang Y.-M."/>
            <person name="Hseu M.-J."/>
            <person name="Tsai I.-H."/>
        </authorList>
    </citation>
    <scope>PROTEIN SEQUENCE</scope>
    <scope>BIOPHYSICOCHEMICAL PROPERTIES</scope>
    <scope>MASS SPECTROMETRY</scope>
    <scope>SUBCELLULAR LOCATION</scope>
    <source>
        <tissue>Venom</tissue>
    </source>
</reference>
<accession>P0DJN8</accession>
<keyword id="KW-0106">Calcium</keyword>
<keyword id="KW-0903">Direct protein sequencing</keyword>
<keyword id="KW-1015">Disulfide bond</keyword>
<keyword id="KW-0378">Hydrolase</keyword>
<keyword id="KW-0442">Lipid degradation</keyword>
<keyword id="KW-0443">Lipid metabolism</keyword>
<keyword id="KW-0479">Metal-binding</keyword>
<keyword id="KW-0959">Myotoxin</keyword>
<keyword id="KW-0964">Secreted</keyword>
<keyword id="KW-0800">Toxin</keyword>
<sequence length="23" mass="2778">NLLQFNKMIKIMTKKNAFPFYTS</sequence>
<protein>
    <recommendedName>
        <fullName evidence="3">Basic phospholipase A2 Smb-N6</fullName>
        <shortName>svPLA2</shortName>
        <ecNumber>3.1.1.4</ecNumber>
    </recommendedName>
    <alternativeName>
        <fullName>Phosphatidylcholine 2-acylhydrolase</fullName>
    </alternativeName>
</protein>